<accession>A3MYK1</accession>
<comment type="function">
    <text evidence="1">Endonuclease that specifically degrades the RNA of RNA-DNA hybrids.</text>
</comment>
<comment type="catalytic activity">
    <reaction evidence="1">
        <text>Endonucleolytic cleavage to 5'-phosphomonoester.</text>
        <dbReference type="EC" id="3.1.26.4"/>
    </reaction>
</comment>
<comment type="cofactor">
    <cofactor evidence="1">
        <name>Mn(2+)</name>
        <dbReference type="ChEBI" id="CHEBI:29035"/>
    </cofactor>
    <cofactor evidence="1">
        <name>Mg(2+)</name>
        <dbReference type="ChEBI" id="CHEBI:18420"/>
    </cofactor>
    <text evidence="1">Manganese or magnesium. Binds 1 divalent metal ion per monomer in the absence of substrate. May bind a second metal ion after substrate binding.</text>
</comment>
<comment type="subcellular location">
    <subcellularLocation>
        <location evidence="1">Cytoplasm</location>
    </subcellularLocation>
</comment>
<comment type="similarity">
    <text evidence="1">Belongs to the RNase HII family.</text>
</comment>
<organism>
    <name type="scientific">Actinobacillus pleuropneumoniae serotype 5b (strain L20)</name>
    <dbReference type="NCBI Taxonomy" id="416269"/>
    <lineage>
        <taxon>Bacteria</taxon>
        <taxon>Pseudomonadati</taxon>
        <taxon>Pseudomonadota</taxon>
        <taxon>Gammaproteobacteria</taxon>
        <taxon>Pasteurellales</taxon>
        <taxon>Pasteurellaceae</taxon>
        <taxon>Actinobacillus</taxon>
    </lineage>
</organism>
<protein>
    <recommendedName>
        <fullName evidence="1">Ribonuclease HII</fullName>
        <shortName evidence="1">RNase HII</shortName>
        <ecNumber evidence="1">3.1.26.4</ecNumber>
    </recommendedName>
</protein>
<proteinExistence type="inferred from homology"/>
<dbReference type="EC" id="3.1.26.4" evidence="1"/>
<dbReference type="EMBL" id="CP000569">
    <property type="protein sequence ID" value="ABN73237.1"/>
    <property type="molecule type" value="Genomic_DNA"/>
</dbReference>
<dbReference type="RefSeq" id="WP_005618717.1">
    <property type="nucleotide sequence ID" value="NC_009053.1"/>
</dbReference>
<dbReference type="SMR" id="A3MYK1"/>
<dbReference type="STRING" id="416269.APL_0129"/>
<dbReference type="EnsemblBacteria" id="ABN73237">
    <property type="protein sequence ID" value="ABN73237"/>
    <property type="gene ID" value="APL_0129"/>
</dbReference>
<dbReference type="GeneID" id="48598276"/>
<dbReference type="KEGG" id="apl:APL_0129"/>
<dbReference type="eggNOG" id="COG0164">
    <property type="taxonomic scope" value="Bacteria"/>
</dbReference>
<dbReference type="HOGENOM" id="CLU_036532_3_2_6"/>
<dbReference type="Proteomes" id="UP000001432">
    <property type="component" value="Chromosome"/>
</dbReference>
<dbReference type="GO" id="GO:0005737">
    <property type="term" value="C:cytoplasm"/>
    <property type="evidence" value="ECO:0007669"/>
    <property type="project" value="UniProtKB-SubCell"/>
</dbReference>
<dbReference type="GO" id="GO:0032299">
    <property type="term" value="C:ribonuclease H2 complex"/>
    <property type="evidence" value="ECO:0007669"/>
    <property type="project" value="TreeGrafter"/>
</dbReference>
<dbReference type="GO" id="GO:0030145">
    <property type="term" value="F:manganese ion binding"/>
    <property type="evidence" value="ECO:0007669"/>
    <property type="project" value="UniProtKB-UniRule"/>
</dbReference>
<dbReference type="GO" id="GO:0003723">
    <property type="term" value="F:RNA binding"/>
    <property type="evidence" value="ECO:0007669"/>
    <property type="project" value="InterPro"/>
</dbReference>
<dbReference type="GO" id="GO:0004523">
    <property type="term" value="F:RNA-DNA hybrid ribonuclease activity"/>
    <property type="evidence" value="ECO:0007669"/>
    <property type="project" value="UniProtKB-UniRule"/>
</dbReference>
<dbReference type="GO" id="GO:0043137">
    <property type="term" value="P:DNA replication, removal of RNA primer"/>
    <property type="evidence" value="ECO:0007669"/>
    <property type="project" value="TreeGrafter"/>
</dbReference>
<dbReference type="GO" id="GO:0006298">
    <property type="term" value="P:mismatch repair"/>
    <property type="evidence" value="ECO:0007669"/>
    <property type="project" value="TreeGrafter"/>
</dbReference>
<dbReference type="CDD" id="cd07182">
    <property type="entry name" value="RNase_HII_bacteria_HII_like"/>
    <property type="match status" value="1"/>
</dbReference>
<dbReference type="FunFam" id="3.30.420.10:FF:000006">
    <property type="entry name" value="Ribonuclease HII"/>
    <property type="match status" value="1"/>
</dbReference>
<dbReference type="Gene3D" id="3.30.420.10">
    <property type="entry name" value="Ribonuclease H-like superfamily/Ribonuclease H"/>
    <property type="match status" value="1"/>
</dbReference>
<dbReference type="HAMAP" id="MF_00052_B">
    <property type="entry name" value="RNase_HII_B"/>
    <property type="match status" value="1"/>
</dbReference>
<dbReference type="InterPro" id="IPR022898">
    <property type="entry name" value="RNase_HII"/>
</dbReference>
<dbReference type="InterPro" id="IPR001352">
    <property type="entry name" value="RNase_HII/HIII"/>
</dbReference>
<dbReference type="InterPro" id="IPR024567">
    <property type="entry name" value="RNase_HII/HIII_dom"/>
</dbReference>
<dbReference type="InterPro" id="IPR012337">
    <property type="entry name" value="RNaseH-like_sf"/>
</dbReference>
<dbReference type="InterPro" id="IPR036397">
    <property type="entry name" value="RNaseH_sf"/>
</dbReference>
<dbReference type="NCBIfam" id="NF000594">
    <property type="entry name" value="PRK00015.1-1"/>
    <property type="match status" value="1"/>
</dbReference>
<dbReference type="NCBIfam" id="NF000595">
    <property type="entry name" value="PRK00015.1-3"/>
    <property type="match status" value="1"/>
</dbReference>
<dbReference type="NCBIfam" id="NF000596">
    <property type="entry name" value="PRK00015.1-4"/>
    <property type="match status" value="1"/>
</dbReference>
<dbReference type="PANTHER" id="PTHR10954">
    <property type="entry name" value="RIBONUCLEASE H2 SUBUNIT A"/>
    <property type="match status" value="1"/>
</dbReference>
<dbReference type="PANTHER" id="PTHR10954:SF18">
    <property type="entry name" value="RIBONUCLEASE HII"/>
    <property type="match status" value="1"/>
</dbReference>
<dbReference type="Pfam" id="PF01351">
    <property type="entry name" value="RNase_HII"/>
    <property type="match status" value="1"/>
</dbReference>
<dbReference type="SUPFAM" id="SSF53098">
    <property type="entry name" value="Ribonuclease H-like"/>
    <property type="match status" value="1"/>
</dbReference>
<dbReference type="PROSITE" id="PS51975">
    <property type="entry name" value="RNASE_H_2"/>
    <property type="match status" value="1"/>
</dbReference>
<keyword id="KW-0963">Cytoplasm</keyword>
<keyword id="KW-0255">Endonuclease</keyword>
<keyword id="KW-0378">Hydrolase</keyword>
<keyword id="KW-0464">Manganese</keyword>
<keyword id="KW-0479">Metal-binding</keyword>
<keyword id="KW-0540">Nuclease</keyword>
<keyword id="KW-1185">Reference proteome</keyword>
<sequence length="197" mass="21417">MSTNFIYPNAHLIAGVDEVGRGPLVGAVVTAAVILAPNNPIEGLADSKKLSEKKRLLLAEEIKAKALCWSLGRAEPEEIDRLNILHATMLAMQRAVAGLNIQPDFVLVDGNRIPTLPMPAQAVIKGDSLVAEISAASILAKVARDQEMAELDVQYPEYGFAKHKGYPTKLHFEKLEQFGATPFHRKSFAPVKKILGL</sequence>
<reference key="1">
    <citation type="journal article" date="2008" name="J. Bacteriol.">
        <title>The complete genome sequence of Actinobacillus pleuropneumoniae L20 (serotype 5b).</title>
        <authorList>
            <person name="Foote S.J."/>
            <person name="Bosse J.T."/>
            <person name="Bouevitch A.B."/>
            <person name="Langford P.R."/>
            <person name="Young N.M."/>
            <person name="Nash J.H.E."/>
        </authorList>
    </citation>
    <scope>NUCLEOTIDE SEQUENCE [LARGE SCALE GENOMIC DNA]</scope>
    <source>
        <strain>L20</strain>
    </source>
</reference>
<evidence type="ECO:0000255" key="1">
    <source>
        <dbReference type="HAMAP-Rule" id="MF_00052"/>
    </source>
</evidence>
<evidence type="ECO:0000255" key="2">
    <source>
        <dbReference type="PROSITE-ProRule" id="PRU01319"/>
    </source>
</evidence>
<gene>
    <name evidence="1" type="primary">rnhB</name>
    <name type="ordered locus">APL_0129</name>
</gene>
<name>RNH2_ACTP2</name>
<feature type="chain" id="PRO_1000031112" description="Ribonuclease HII">
    <location>
        <begin position="1"/>
        <end position="197"/>
    </location>
</feature>
<feature type="domain" description="RNase H type-2" evidence="2">
    <location>
        <begin position="11"/>
        <end position="197"/>
    </location>
</feature>
<feature type="binding site" evidence="1">
    <location>
        <position position="17"/>
    </location>
    <ligand>
        <name>a divalent metal cation</name>
        <dbReference type="ChEBI" id="CHEBI:60240"/>
    </ligand>
</feature>
<feature type="binding site" evidence="1">
    <location>
        <position position="18"/>
    </location>
    <ligand>
        <name>a divalent metal cation</name>
        <dbReference type="ChEBI" id="CHEBI:60240"/>
    </ligand>
</feature>
<feature type="binding site" evidence="1">
    <location>
        <position position="109"/>
    </location>
    <ligand>
        <name>a divalent metal cation</name>
        <dbReference type="ChEBI" id="CHEBI:60240"/>
    </ligand>
</feature>